<feature type="chain" id="PRO_0000114301" description="Chromosomal replication initiator protein DnaA">
    <location>
        <begin position="1"/>
        <end position="460"/>
    </location>
</feature>
<feature type="region of interest" description="Domain I, interacts with DnaA modulators" evidence="1">
    <location>
        <begin position="1"/>
        <end position="91"/>
    </location>
</feature>
<feature type="region of interest" description="Domain II" evidence="1">
    <location>
        <begin position="91"/>
        <end position="122"/>
    </location>
</feature>
<feature type="region of interest" description="Domain III, AAA+ region" evidence="1">
    <location>
        <begin position="123"/>
        <end position="342"/>
    </location>
</feature>
<feature type="region of interest" description="Domain IV, binds dsDNA" evidence="1">
    <location>
        <begin position="343"/>
        <end position="460"/>
    </location>
</feature>
<feature type="binding site" evidence="1">
    <location>
        <position position="169"/>
    </location>
    <ligand>
        <name>ATP</name>
        <dbReference type="ChEBI" id="CHEBI:30616"/>
    </ligand>
</feature>
<feature type="binding site" evidence="1">
    <location>
        <position position="171"/>
    </location>
    <ligand>
        <name>ATP</name>
        <dbReference type="ChEBI" id="CHEBI:30616"/>
    </ligand>
</feature>
<feature type="binding site" evidence="1">
    <location>
        <position position="172"/>
    </location>
    <ligand>
        <name>ATP</name>
        <dbReference type="ChEBI" id="CHEBI:30616"/>
    </ligand>
</feature>
<feature type="binding site" evidence="1">
    <location>
        <position position="173"/>
    </location>
    <ligand>
        <name>ATP</name>
        <dbReference type="ChEBI" id="CHEBI:30616"/>
    </ligand>
</feature>
<comment type="function">
    <text evidence="1">Plays an essential role in the initiation and regulation of chromosomal replication. ATP-DnaA binds to the origin of replication (oriC) to initiate formation of the DNA replication initiation complex once per cell cycle. Binds the DnaA box (a 9 base pair repeat at the origin) and separates the double-stranded (ds)DNA. Forms a right-handed helical filament on oriC DNA; dsDNA binds to the exterior of the filament while single-stranded (ss)DNA is stabiized in the filament's interior. The ATP-DnaA-oriC complex binds and stabilizes one strand of the AT-rich DNA unwinding element (DUE), permitting loading of DNA polymerase. After initiation quickly degrades to an ADP-DnaA complex that is not apt for DNA replication. Binds acidic phospholipids.</text>
</comment>
<comment type="subunit">
    <text evidence="1">Oligomerizes as a right-handed, spiral filament on DNA at oriC.</text>
</comment>
<comment type="subcellular location">
    <subcellularLocation>
        <location evidence="1">Cytoplasm</location>
    </subcellularLocation>
</comment>
<comment type="domain">
    <text evidence="1">Domain I is involved in oligomerization and binding regulators, domain II is flexibile and of varying length in different bacteria, domain III forms the AAA+ region, while domain IV binds dsDNA.</text>
</comment>
<comment type="similarity">
    <text evidence="1">Belongs to the DnaA family.</text>
</comment>
<gene>
    <name evidence="1" type="primary">dnaA</name>
    <name type="ordered locus">WD_0001</name>
</gene>
<dbReference type="EMBL" id="AE017196">
    <property type="protein sequence ID" value="AAS13770.1"/>
    <property type="molecule type" value="Genomic_DNA"/>
</dbReference>
<dbReference type="RefSeq" id="WP_010962298.1">
    <property type="nucleotide sequence ID" value="NZ_OX384529.1"/>
</dbReference>
<dbReference type="SMR" id="Q73IZ0"/>
<dbReference type="EnsemblBacteria" id="AAS13770">
    <property type="protein sequence ID" value="AAS13770"/>
    <property type="gene ID" value="WD_0001"/>
</dbReference>
<dbReference type="GeneID" id="58032001"/>
<dbReference type="KEGG" id="wol:WD_0001"/>
<dbReference type="eggNOG" id="COG0593">
    <property type="taxonomic scope" value="Bacteria"/>
</dbReference>
<dbReference type="Proteomes" id="UP000008215">
    <property type="component" value="Chromosome"/>
</dbReference>
<dbReference type="GO" id="GO:0005737">
    <property type="term" value="C:cytoplasm"/>
    <property type="evidence" value="ECO:0007669"/>
    <property type="project" value="UniProtKB-SubCell"/>
</dbReference>
<dbReference type="GO" id="GO:0005886">
    <property type="term" value="C:plasma membrane"/>
    <property type="evidence" value="ECO:0007669"/>
    <property type="project" value="TreeGrafter"/>
</dbReference>
<dbReference type="GO" id="GO:0005524">
    <property type="term" value="F:ATP binding"/>
    <property type="evidence" value="ECO:0007669"/>
    <property type="project" value="UniProtKB-UniRule"/>
</dbReference>
<dbReference type="GO" id="GO:0016887">
    <property type="term" value="F:ATP hydrolysis activity"/>
    <property type="evidence" value="ECO:0007669"/>
    <property type="project" value="InterPro"/>
</dbReference>
<dbReference type="GO" id="GO:0003688">
    <property type="term" value="F:DNA replication origin binding"/>
    <property type="evidence" value="ECO:0007669"/>
    <property type="project" value="UniProtKB-UniRule"/>
</dbReference>
<dbReference type="GO" id="GO:0008289">
    <property type="term" value="F:lipid binding"/>
    <property type="evidence" value="ECO:0007669"/>
    <property type="project" value="UniProtKB-KW"/>
</dbReference>
<dbReference type="GO" id="GO:0006270">
    <property type="term" value="P:DNA replication initiation"/>
    <property type="evidence" value="ECO:0007669"/>
    <property type="project" value="UniProtKB-UniRule"/>
</dbReference>
<dbReference type="GO" id="GO:0006275">
    <property type="term" value="P:regulation of DNA replication"/>
    <property type="evidence" value="ECO:0007669"/>
    <property type="project" value="UniProtKB-UniRule"/>
</dbReference>
<dbReference type="CDD" id="cd00009">
    <property type="entry name" value="AAA"/>
    <property type="match status" value="1"/>
</dbReference>
<dbReference type="CDD" id="cd06571">
    <property type="entry name" value="Bac_DnaA_C"/>
    <property type="match status" value="1"/>
</dbReference>
<dbReference type="FunFam" id="3.40.50.300:FF:000668">
    <property type="entry name" value="Chromosomal replication initiator protein DnaA"/>
    <property type="match status" value="1"/>
</dbReference>
<dbReference type="Gene3D" id="1.10.1750.10">
    <property type="match status" value="1"/>
</dbReference>
<dbReference type="Gene3D" id="1.10.8.60">
    <property type="match status" value="1"/>
</dbReference>
<dbReference type="Gene3D" id="3.30.300.180">
    <property type="match status" value="1"/>
</dbReference>
<dbReference type="Gene3D" id="3.40.50.300">
    <property type="entry name" value="P-loop containing nucleotide triphosphate hydrolases"/>
    <property type="match status" value="1"/>
</dbReference>
<dbReference type="HAMAP" id="MF_00377">
    <property type="entry name" value="DnaA_bact"/>
    <property type="match status" value="1"/>
</dbReference>
<dbReference type="InterPro" id="IPR003593">
    <property type="entry name" value="AAA+_ATPase"/>
</dbReference>
<dbReference type="InterPro" id="IPR001957">
    <property type="entry name" value="Chromosome_initiator_DnaA"/>
</dbReference>
<dbReference type="InterPro" id="IPR020591">
    <property type="entry name" value="Chromosome_initiator_DnaA-like"/>
</dbReference>
<dbReference type="InterPro" id="IPR018312">
    <property type="entry name" value="Chromosome_initiator_DnaA_CS"/>
</dbReference>
<dbReference type="InterPro" id="IPR013159">
    <property type="entry name" value="DnaA_C"/>
</dbReference>
<dbReference type="InterPro" id="IPR013317">
    <property type="entry name" value="DnaA_dom"/>
</dbReference>
<dbReference type="InterPro" id="IPR024633">
    <property type="entry name" value="DnaA_N_dom"/>
</dbReference>
<dbReference type="InterPro" id="IPR038454">
    <property type="entry name" value="DnaA_N_sf"/>
</dbReference>
<dbReference type="InterPro" id="IPR027417">
    <property type="entry name" value="P-loop_NTPase"/>
</dbReference>
<dbReference type="InterPro" id="IPR010921">
    <property type="entry name" value="Trp_repressor/repl_initiator"/>
</dbReference>
<dbReference type="NCBIfam" id="TIGR00362">
    <property type="entry name" value="DnaA"/>
    <property type="match status" value="1"/>
</dbReference>
<dbReference type="PANTHER" id="PTHR30050">
    <property type="entry name" value="CHROMOSOMAL REPLICATION INITIATOR PROTEIN DNAA"/>
    <property type="match status" value="1"/>
</dbReference>
<dbReference type="PANTHER" id="PTHR30050:SF2">
    <property type="entry name" value="CHROMOSOMAL REPLICATION INITIATOR PROTEIN DNAA"/>
    <property type="match status" value="1"/>
</dbReference>
<dbReference type="Pfam" id="PF00308">
    <property type="entry name" value="Bac_DnaA"/>
    <property type="match status" value="1"/>
</dbReference>
<dbReference type="Pfam" id="PF08299">
    <property type="entry name" value="Bac_DnaA_C"/>
    <property type="match status" value="1"/>
</dbReference>
<dbReference type="Pfam" id="PF11638">
    <property type="entry name" value="DnaA_N"/>
    <property type="match status" value="1"/>
</dbReference>
<dbReference type="PRINTS" id="PR00051">
    <property type="entry name" value="DNAA"/>
</dbReference>
<dbReference type="SMART" id="SM00382">
    <property type="entry name" value="AAA"/>
    <property type="match status" value="1"/>
</dbReference>
<dbReference type="SMART" id="SM00760">
    <property type="entry name" value="Bac_DnaA_C"/>
    <property type="match status" value="1"/>
</dbReference>
<dbReference type="SUPFAM" id="SSF52540">
    <property type="entry name" value="P-loop containing nucleoside triphosphate hydrolases"/>
    <property type="match status" value="1"/>
</dbReference>
<dbReference type="SUPFAM" id="SSF48295">
    <property type="entry name" value="TrpR-like"/>
    <property type="match status" value="1"/>
</dbReference>
<dbReference type="PROSITE" id="PS01008">
    <property type="entry name" value="DNAA"/>
    <property type="match status" value="1"/>
</dbReference>
<name>DNAA_WOLPM</name>
<reference key="1">
    <citation type="journal article" date="2004" name="PLoS Biol.">
        <title>Phylogenomics of the reproductive parasite Wolbachia pipientis wMel: a streamlined genome overrun by mobile genetic elements.</title>
        <authorList>
            <person name="Wu M."/>
            <person name="Sun L.V."/>
            <person name="Vamathevan J.J."/>
            <person name="Riegler M."/>
            <person name="DeBoy R.T."/>
            <person name="Brownlie J.C."/>
            <person name="McGraw E.A."/>
            <person name="Martin W."/>
            <person name="Esser C."/>
            <person name="Ahmadinejad N."/>
            <person name="Wiegand C."/>
            <person name="Madupu R."/>
            <person name="Beanan M.J."/>
            <person name="Brinkac L.M."/>
            <person name="Daugherty S.C."/>
            <person name="Durkin A.S."/>
            <person name="Kolonay J.F."/>
            <person name="Nelson W.C."/>
            <person name="Mohamoud Y."/>
            <person name="Lee P."/>
            <person name="Berry K.J."/>
            <person name="Young M.B."/>
            <person name="Utterback T.R."/>
            <person name="Weidman J.F."/>
            <person name="Nierman W.C."/>
            <person name="Paulsen I.T."/>
            <person name="Nelson K.E."/>
            <person name="Tettelin H."/>
            <person name="O'Neill S.L."/>
            <person name="Eisen J.A."/>
        </authorList>
    </citation>
    <scope>NUCLEOTIDE SEQUENCE [LARGE SCALE GENOMIC DNA]</scope>
</reference>
<organism>
    <name type="scientific">Wolbachia pipientis wMel</name>
    <dbReference type="NCBI Taxonomy" id="163164"/>
    <lineage>
        <taxon>Bacteria</taxon>
        <taxon>Pseudomonadati</taxon>
        <taxon>Pseudomonadota</taxon>
        <taxon>Alphaproteobacteria</taxon>
        <taxon>Rickettsiales</taxon>
        <taxon>Anaplasmataceae</taxon>
        <taxon>Wolbachieae</taxon>
        <taxon>Wolbachia</taxon>
    </lineage>
</organism>
<protein>
    <recommendedName>
        <fullName evidence="1">Chromosomal replication initiator protein DnaA</fullName>
    </recommendedName>
</protein>
<evidence type="ECO:0000255" key="1">
    <source>
        <dbReference type="HAMAP-Rule" id="MF_00377"/>
    </source>
</evidence>
<keyword id="KW-0067">ATP-binding</keyword>
<keyword id="KW-0963">Cytoplasm</keyword>
<keyword id="KW-0235">DNA replication</keyword>
<keyword id="KW-0238">DNA-binding</keyword>
<keyword id="KW-0446">Lipid-binding</keyword>
<keyword id="KW-0547">Nucleotide-binding</keyword>
<sequence>MNLTSPKVSTMFFDQIITVTDHNVTWEKIQNCLYNLYGEATYNSWLSSLKFVSSRNGEVLLSVSTRFIKEWITVHYMKKILSLWQSEDKSIRSIDIQVIEERNSNFNVILKNREESNHNLGSPLDPRFTFDNFVVGKPNELAFTAAKRVAESIDPILGSNPLFLYGGVGLGKTHLMHAIAWHIVNSPSAKRKVVYLSAEKFMYQYITALRSKDIMLFKEQFRSVDVLMVDDVQFISGKDSTQEEFFHTFNALIDQNKQLVISADRSPSDLDGVEERIKSRLGWGLVADINETTFELRLGILQAKVEQMNMYVPKDVLEFLARNIKSNIRELEGALNKVTHTSLIGRSMTVESASETLIDLLRSNHRSVTIEEIQKKVAEFFNIKVADMQSNRRLRSLARPRQIAMYFAKKFTQKSLPDIGRNFGGRDHATVIHAVKQVENFIKTDSKFADEINRLKKMFK</sequence>
<proteinExistence type="inferred from homology"/>
<accession>Q73IZ0</accession>